<feature type="chain" id="PRO_1000134968" description="Imidazole glycerol phosphate synthase subunit HisF">
    <location>
        <begin position="1"/>
        <end position="252"/>
    </location>
</feature>
<feature type="active site" evidence="1">
    <location>
        <position position="11"/>
    </location>
</feature>
<feature type="active site" evidence="1">
    <location>
        <position position="130"/>
    </location>
</feature>
<accession>A9VLH7</accession>
<reference key="1">
    <citation type="journal article" date="2008" name="Chem. Biol. Interact.">
        <title>Extending the Bacillus cereus group genomics to putative food-borne pathogens of different toxicity.</title>
        <authorList>
            <person name="Lapidus A."/>
            <person name="Goltsman E."/>
            <person name="Auger S."/>
            <person name="Galleron N."/>
            <person name="Segurens B."/>
            <person name="Dossat C."/>
            <person name="Land M.L."/>
            <person name="Broussolle V."/>
            <person name="Brillard J."/>
            <person name="Guinebretiere M.-H."/>
            <person name="Sanchis V."/>
            <person name="Nguen-the C."/>
            <person name="Lereclus D."/>
            <person name="Richardson P."/>
            <person name="Wincker P."/>
            <person name="Weissenbach J."/>
            <person name="Ehrlich S.D."/>
            <person name="Sorokin A."/>
        </authorList>
    </citation>
    <scope>NUCLEOTIDE SEQUENCE [LARGE SCALE GENOMIC DNA]</scope>
    <source>
        <strain>KBAB4</strain>
    </source>
</reference>
<name>HIS6_BACMK</name>
<protein>
    <recommendedName>
        <fullName evidence="1">Imidazole glycerol phosphate synthase subunit HisF</fullName>
        <ecNumber evidence="1">4.3.2.10</ecNumber>
    </recommendedName>
    <alternativeName>
        <fullName evidence="1">IGP synthase cyclase subunit</fullName>
    </alternativeName>
    <alternativeName>
        <fullName evidence="1">IGP synthase subunit HisF</fullName>
    </alternativeName>
    <alternativeName>
        <fullName evidence="1">ImGP synthase subunit HisF</fullName>
        <shortName evidence="1">IGPS subunit HisF</shortName>
    </alternativeName>
</protein>
<keyword id="KW-0028">Amino-acid biosynthesis</keyword>
<keyword id="KW-0963">Cytoplasm</keyword>
<keyword id="KW-0368">Histidine biosynthesis</keyword>
<keyword id="KW-0456">Lyase</keyword>
<proteinExistence type="inferred from homology"/>
<dbReference type="EC" id="4.3.2.10" evidence="1"/>
<dbReference type="EMBL" id="CP000903">
    <property type="protein sequence ID" value="ABY42579.1"/>
    <property type="molecule type" value="Genomic_DNA"/>
</dbReference>
<dbReference type="RefSeq" id="WP_002140975.1">
    <property type="nucleotide sequence ID" value="NC_010184.1"/>
</dbReference>
<dbReference type="SMR" id="A9VLH7"/>
<dbReference type="KEGG" id="bwe:BcerKBAB4_1332"/>
<dbReference type="eggNOG" id="COG0107">
    <property type="taxonomic scope" value="Bacteria"/>
</dbReference>
<dbReference type="HOGENOM" id="CLU_048577_4_0_9"/>
<dbReference type="UniPathway" id="UPA00031">
    <property type="reaction ID" value="UER00010"/>
</dbReference>
<dbReference type="Proteomes" id="UP000002154">
    <property type="component" value="Chromosome"/>
</dbReference>
<dbReference type="GO" id="GO:0005737">
    <property type="term" value="C:cytoplasm"/>
    <property type="evidence" value="ECO:0007669"/>
    <property type="project" value="UniProtKB-SubCell"/>
</dbReference>
<dbReference type="GO" id="GO:0000107">
    <property type="term" value="F:imidazoleglycerol-phosphate synthase activity"/>
    <property type="evidence" value="ECO:0007669"/>
    <property type="project" value="UniProtKB-UniRule"/>
</dbReference>
<dbReference type="GO" id="GO:0016829">
    <property type="term" value="F:lyase activity"/>
    <property type="evidence" value="ECO:0007669"/>
    <property type="project" value="UniProtKB-KW"/>
</dbReference>
<dbReference type="GO" id="GO:0000105">
    <property type="term" value="P:L-histidine biosynthetic process"/>
    <property type="evidence" value="ECO:0007669"/>
    <property type="project" value="UniProtKB-UniRule"/>
</dbReference>
<dbReference type="CDD" id="cd04731">
    <property type="entry name" value="HisF"/>
    <property type="match status" value="1"/>
</dbReference>
<dbReference type="FunFam" id="3.20.20.70:FF:000006">
    <property type="entry name" value="Imidazole glycerol phosphate synthase subunit HisF"/>
    <property type="match status" value="1"/>
</dbReference>
<dbReference type="Gene3D" id="3.20.20.70">
    <property type="entry name" value="Aldolase class I"/>
    <property type="match status" value="1"/>
</dbReference>
<dbReference type="HAMAP" id="MF_01013">
    <property type="entry name" value="HisF"/>
    <property type="match status" value="1"/>
</dbReference>
<dbReference type="InterPro" id="IPR013785">
    <property type="entry name" value="Aldolase_TIM"/>
</dbReference>
<dbReference type="InterPro" id="IPR006062">
    <property type="entry name" value="His_biosynth"/>
</dbReference>
<dbReference type="InterPro" id="IPR004651">
    <property type="entry name" value="HisF"/>
</dbReference>
<dbReference type="InterPro" id="IPR011060">
    <property type="entry name" value="RibuloseP-bd_barrel"/>
</dbReference>
<dbReference type="NCBIfam" id="TIGR00735">
    <property type="entry name" value="hisF"/>
    <property type="match status" value="1"/>
</dbReference>
<dbReference type="Pfam" id="PF00977">
    <property type="entry name" value="His_biosynth"/>
    <property type="match status" value="1"/>
</dbReference>
<dbReference type="SUPFAM" id="SSF51366">
    <property type="entry name" value="Ribulose-phoshate binding barrel"/>
    <property type="match status" value="1"/>
</dbReference>
<comment type="function">
    <text evidence="1">IGPS catalyzes the conversion of PRFAR and glutamine to IGP, AICAR and glutamate. The HisF subunit catalyzes the cyclization activity that produces IGP and AICAR from PRFAR using the ammonia provided by the HisH subunit.</text>
</comment>
<comment type="catalytic activity">
    <reaction evidence="1">
        <text>5-[(5-phospho-1-deoxy-D-ribulos-1-ylimino)methylamino]-1-(5-phospho-beta-D-ribosyl)imidazole-4-carboxamide + L-glutamine = D-erythro-1-(imidazol-4-yl)glycerol 3-phosphate + 5-amino-1-(5-phospho-beta-D-ribosyl)imidazole-4-carboxamide + L-glutamate + H(+)</text>
        <dbReference type="Rhea" id="RHEA:24793"/>
        <dbReference type="ChEBI" id="CHEBI:15378"/>
        <dbReference type="ChEBI" id="CHEBI:29985"/>
        <dbReference type="ChEBI" id="CHEBI:58278"/>
        <dbReference type="ChEBI" id="CHEBI:58359"/>
        <dbReference type="ChEBI" id="CHEBI:58475"/>
        <dbReference type="ChEBI" id="CHEBI:58525"/>
        <dbReference type="EC" id="4.3.2.10"/>
    </reaction>
</comment>
<comment type="pathway">
    <text evidence="1">Amino-acid biosynthesis; L-histidine biosynthesis; L-histidine from 5-phospho-alpha-D-ribose 1-diphosphate: step 5/9.</text>
</comment>
<comment type="subunit">
    <text evidence="1">Heterodimer of HisH and HisF.</text>
</comment>
<comment type="subcellular location">
    <subcellularLocation>
        <location evidence="1">Cytoplasm</location>
    </subcellularLocation>
</comment>
<comment type="similarity">
    <text evidence="1">Belongs to the HisA/HisF family.</text>
</comment>
<evidence type="ECO:0000255" key="1">
    <source>
        <dbReference type="HAMAP-Rule" id="MF_01013"/>
    </source>
</evidence>
<organism>
    <name type="scientific">Bacillus mycoides (strain KBAB4)</name>
    <name type="common">Bacillus weihenstephanensis</name>
    <dbReference type="NCBI Taxonomy" id="315730"/>
    <lineage>
        <taxon>Bacteria</taxon>
        <taxon>Bacillati</taxon>
        <taxon>Bacillota</taxon>
        <taxon>Bacilli</taxon>
        <taxon>Bacillales</taxon>
        <taxon>Bacillaceae</taxon>
        <taxon>Bacillus</taxon>
        <taxon>Bacillus cereus group</taxon>
    </lineage>
</organism>
<gene>
    <name evidence="1" type="primary">hisF</name>
    <name type="ordered locus">BcerKBAB4_1332</name>
</gene>
<sequence length="252" mass="27001">MLAKRIIPCLDVKEGRVVKGVNFIGLQDVGDPVEIAALYNDAGADEIVFLDITATHEGRKTIIDVVEQTASKVFIPLTVGGGISSVKDMYNLLRAGADKVSINSAAVRNPKLIQEGAEHFGSQCIVVAIDARKVEEDKWNVYVNGGRVDTGMDAIEWAKRVVKLGAGEILLTSMDADGTKNGYDLRLTGAISNSVSVPVIASGGCGHVDHIIEVFQKTTVDAALAASIFHYGEATVQDVKRKLREANVEVRL</sequence>